<protein>
    <recommendedName>
        <fullName evidence="2">Protein suex-1</fullName>
    </recommendedName>
</protein>
<gene>
    <name evidence="3" type="primary">suex-1</name>
    <name evidence="3" type="ORF">F12A10.7</name>
</gene>
<accession>P50438</accession>
<evidence type="ECO:0000255" key="1"/>
<evidence type="ECO:0000305" key="2"/>
<evidence type="ECO:0000312" key="3">
    <source>
        <dbReference type="WormBase" id="F12A10.7"/>
    </source>
</evidence>
<dbReference type="EMBL" id="BX284602">
    <property type="protein sequence ID" value="CCD69294.1"/>
    <property type="molecule type" value="Genomic_DNA"/>
</dbReference>
<dbReference type="PIR" id="T16045">
    <property type="entry name" value="T16045"/>
</dbReference>
<dbReference type="RefSeq" id="NP_495049.2">
    <property type="nucleotide sequence ID" value="NM_062648.3"/>
</dbReference>
<dbReference type="FunCoup" id="P50438">
    <property type="interactions" value="307"/>
</dbReference>
<dbReference type="STRING" id="6239.F12A10.7.1"/>
<dbReference type="PaxDb" id="6239-F12A10.7"/>
<dbReference type="EnsemblMetazoa" id="F12A10.7.1">
    <property type="protein sequence ID" value="F12A10.7.1"/>
    <property type="gene ID" value="WBGene00017396"/>
</dbReference>
<dbReference type="GeneID" id="184375"/>
<dbReference type="KEGG" id="cel:CELE_F12A10.7"/>
<dbReference type="UCSC" id="F12A10.7">
    <property type="organism name" value="c. elegans"/>
</dbReference>
<dbReference type="AGR" id="WB:WBGene00017396"/>
<dbReference type="CTD" id="184375"/>
<dbReference type="WormBase" id="F12A10.7">
    <property type="protein sequence ID" value="CE39352"/>
    <property type="gene ID" value="WBGene00017396"/>
    <property type="gene designation" value="suex-1"/>
</dbReference>
<dbReference type="eggNOG" id="ENOG502RT9N">
    <property type="taxonomic scope" value="Eukaryota"/>
</dbReference>
<dbReference type="GeneTree" id="ENSGT00940000176790"/>
<dbReference type="HOGENOM" id="CLU_2212272_0_0_1"/>
<dbReference type="InParanoid" id="P50438"/>
<dbReference type="OMA" id="PENLMWR"/>
<dbReference type="OrthoDB" id="5875839at2759"/>
<dbReference type="PRO" id="PR:P50438"/>
<dbReference type="Proteomes" id="UP000001940">
    <property type="component" value="Chromosome II"/>
</dbReference>
<dbReference type="Bgee" id="WBGene00017396">
    <property type="expression patterns" value="Expressed in material anatomical entity and 3 other cell types or tissues"/>
</dbReference>
<feature type="signal peptide" evidence="1">
    <location>
        <begin position="1"/>
        <end position="22"/>
    </location>
</feature>
<feature type="chain" id="PRO_0000065293" description="Protein suex-1">
    <location>
        <begin position="23"/>
        <end position="113"/>
    </location>
</feature>
<keyword id="KW-1185">Reference proteome</keyword>
<keyword id="KW-0732">Signal</keyword>
<sequence length="113" mass="11801">MQSLLVFCLATIILSNFTEASADLETASQSLKHPRNLGWKAPEGHREKRYGGWGGGYPYGGYGGYGGGYGGGYGGGYGGGYGGRYGGNYGSSSWGSYSSYSSGGYSSYNSGFW</sequence>
<proteinExistence type="inferred from homology"/>
<organism>
    <name type="scientific">Caenorhabditis elegans</name>
    <dbReference type="NCBI Taxonomy" id="6239"/>
    <lineage>
        <taxon>Eukaryota</taxon>
        <taxon>Metazoa</taxon>
        <taxon>Ecdysozoa</taxon>
        <taxon>Nematoda</taxon>
        <taxon>Chromadorea</taxon>
        <taxon>Rhabditida</taxon>
        <taxon>Rhabditina</taxon>
        <taxon>Rhabditomorpha</taxon>
        <taxon>Rhabditoidea</taxon>
        <taxon>Rhabditidae</taxon>
        <taxon>Peloderinae</taxon>
        <taxon>Caenorhabditis</taxon>
    </lineage>
</organism>
<reference key="1">
    <citation type="journal article" date="1998" name="Science">
        <title>Genome sequence of the nematode C. elegans: a platform for investigating biology.</title>
        <authorList>
            <consortium name="The C. elegans sequencing consortium"/>
        </authorList>
    </citation>
    <scope>NUCLEOTIDE SEQUENCE [LARGE SCALE GENOMIC DNA]</scope>
    <source>
        <strain>Bristol N2</strain>
    </source>
</reference>
<name>SUEX1_CAEEL</name>